<comment type="function">
    <text evidence="5">Calcium-binding protein that may play a role in the adhesion of neutrophils to fibronectin. May play a role in the formation of focal adhesions.</text>
</comment>
<comment type="subunit">
    <text evidence="1">Homodimer. Interacts with SRI and LCP1 (By similarity).</text>
</comment>
<comment type="subcellular location">
    <subcellularLocation>
        <location evidence="2">Cytoplasm</location>
    </subcellularLocation>
    <subcellularLocation>
        <location evidence="2">Cytoplasmic granule membrane</location>
        <topology evidence="2">Peripheral membrane protein</topology>
        <orientation evidence="2">Cytoplasmic side</orientation>
    </subcellularLocation>
    <text evidence="2">Primarily cytosolic in the absence of calcium or magnesium ions. Relocates to granules and other membranes in response to elevated calcium and magnesium levels.</text>
</comment>
<comment type="disruption phenotype">
    <text evidence="4 5">No visible phenotype. Not essential for normal resistance to microbial infections. Grancalcin-deficient neutrophils exhibit decreased adhesion to fibronectin, and a strongly reduced number of focal adhesion complexes.</text>
</comment>
<comment type="miscellaneous">
    <text evidence="1">This protein has been shown to bind calcium with high affinity.</text>
</comment>
<evidence type="ECO:0000250" key="1"/>
<evidence type="ECO:0000250" key="2">
    <source>
        <dbReference type="UniProtKB" id="P28676"/>
    </source>
</evidence>
<evidence type="ECO:0000255" key="3">
    <source>
        <dbReference type="PROSITE-ProRule" id="PRU00448"/>
    </source>
</evidence>
<evidence type="ECO:0000269" key="4">
    <source>
    </source>
</evidence>
<evidence type="ECO:0000269" key="5">
    <source>
    </source>
</evidence>
<evidence type="ECO:0000305" key="6"/>
<organism>
    <name type="scientific">Mus musculus</name>
    <name type="common">Mouse</name>
    <dbReference type="NCBI Taxonomy" id="10090"/>
    <lineage>
        <taxon>Eukaryota</taxon>
        <taxon>Metazoa</taxon>
        <taxon>Chordata</taxon>
        <taxon>Craniata</taxon>
        <taxon>Vertebrata</taxon>
        <taxon>Euteleostomi</taxon>
        <taxon>Mammalia</taxon>
        <taxon>Eutheria</taxon>
        <taxon>Euarchontoglires</taxon>
        <taxon>Glires</taxon>
        <taxon>Rodentia</taxon>
        <taxon>Myomorpha</taxon>
        <taxon>Muroidea</taxon>
        <taxon>Muridae</taxon>
        <taxon>Murinae</taxon>
        <taxon>Mus</taxon>
        <taxon>Mus</taxon>
    </lineage>
</organism>
<gene>
    <name type="primary">Gca</name>
</gene>
<sequence>MAYPGYGGAFGNFSGQIPGMQMQMGQPMPGAGPNMFSGGYPGYLGYSDSYSPADDSMWTYFTAVAGQDGEVDAEELQRCLTQSGISGTYAPFSLETCRIMIAMLDRDYTGKMGFNEFKELWAALNAWKQNFMTIDQDQSGTVEHHELSQAIALMGYRLSPQTLAAIVRRYSKNGRIFFDDYVACCVKLRALTDFFRRRDHLQQGIVNFMYEDFLQGTMTI</sequence>
<dbReference type="EMBL" id="AF518325">
    <property type="protein sequence ID" value="AAM66720.1"/>
    <property type="molecule type" value="mRNA"/>
</dbReference>
<dbReference type="EMBL" id="AB088388">
    <property type="protein sequence ID" value="BAC07231.1"/>
    <property type="molecule type" value="mRNA"/>
</dbReference>
<dbReference type="EMBL" id="AK033740">
    <property type="protein sequence ID" value="BAC28458.1"/>
    <property type="molecule type" value="mRNA"/>
</dbReference>
<dbReference type="EMBL" id="AK046347">
    <property type="protein sequence ID" value="BAC32686.1"/>
    <property type="molecule type" value="mRNA"/>
</dbReference>
<dbReference type="EMBL" id="AK049317">
    <property type="protein sequence ID" value="BAC33679.1"/>
    <property type="molecule type" value="mRNA"/>
</dbReference>
<dbReference type="EMBL" id="AK050540">
    <property type="protein sequence ID" value="BAC34315.1"/>
    <property type="molecule type" value="mRNA"/>
</dbReference>
<dbReference type="EMBL" id="AK078915">
    <property type="protein sequence ID" value="BAC37457.1"/>
    <property type="molecule type" value="mRNA"/>
</dbReference>
<dbReference type="EMBL" id="BC021450">
    <property type="protein sequence ID" value="AAH21450.1"/>
    <property type="molecule type" value="mRNA"/>
</dbReference>
<dbReference type="CCDS" id="CCDS16069.1"/>
<dbReference type="RefSeq" id="NP_663498.1">
    <property type="nucleotide sequence ID" value="NM_145523.3"/>
</dbReference>
<dbReference type="SMR" id="Q8VC88"/>
<dbReference type="FunCoup" id="Q8VC88">
    <property type="interactions" value="548"/>
</dbReference>
<dbReference type="STRING" id="10090.ENSMUSP00000028257"/>
<dbReference type="PhosphoSitePlus" id="Q8VC88"/>
<dbReference type="SwissPalm" id="Q8VC88"/>
<dbReference type="REPRODUCTION-2DPAGE" id="IPI00308789"/>
<dbReference type="PaxDb" id="10090-ENSMUSP00000028257"/>
<dbReference type="PeptideAtlas" id="Q8VC88"/>
<dbReference type="ProteomicsDB" id="271288"/>
<dbReference type="Antibodypedia" id="33752">
    <property type="antibodies" value="138 antibodies from 26 providers"/>
</dbReference>
<dbReference type="DNASU" id="227960"/>
<dbReference type="Ensembl" id="ENSMUST00000028257.3">
    <property type="protein sequence ID" value="ENSMUSP00000028257.3"/>
    <property type="gene ID" value="ENSMUSG00000026893.5"/>
</dbReference>
<dbReference type="GeneID" id="227960"/>
<dbReference type="KEGG" id="mmu:227960"/>
<dbReference type="UCSC" id="uc008jvp.1">
    <property type="organism name" value="mouse"/>
</dbReference>
<dbReference type="AGR" id="MGI:1918521"/>
<dbReference type="CTD" id="25801"/>
<dbReference type="MGI" id="MGI:1918521">
    <property type="gene designation" value="Gca"/>
</dbReference>
<dbReference type="VEuPathDB" id="HostDB:ENSMUSG00000026893"/>
<dbReference type="eggNOG" id="KOG0037">
    <property type="taxonomic scope" value="Eukaryota"/>
</dbReference>
<dbReference type="GeneTree" id="ENSGT00940000153979"/>
<dbReference type="HOGENOM" id="CLU_051357_4_0_1"/>
<dbReference type="InParanoid" id="Q8VC88"/>
<dbReference type="OMA" id="NGAYSPF"/>
<dbReference type="OrthoDB" id="186625at2759"/>
<dbReference type="PhylomeDB" id="Q8VC88"/>
<dbReference type="TreeFam" id="TF314682"/>
<dbReference type="Reactome" id="R-MMU-6798695">
    <property type="pathway name" value="Neutrophil degranulation"/>
</dbReference>
<dbReference type="BioGRID-ORCS" id="227960">
    <property type="hits" value="1 hit in 78 CRISPR screens"/>
</dbReference>
<dbReference type="PRO" id="PR:Q8VC88"/>
<dbReference type="Proteomes" id="UP000000589">
    <property type="component" value="Chromosome 2"/>
</dbReference>
<dbReference type="RNAct" id="Q8VC88">
    <property type="molecule type" value="protein"/>
</dbReference>
<dbReference type="Bgee" id="ENSMUSG00000026893">
    <property type="expression patterns" value="Expressed in granulocyte and 225 other cell types or tissues"/>
</dbReference>
<dbReference type="GO" id="GO:0005829">
    <property type="term" value="C:cytosol"/>
    <property type="evidence" value="ECO:0000304"/>
    <property type="project" value="MGI"/>
</dbReference>
<dbReference type="GO" id="GO:0005886">
    <property type="term" value="C:plasma membrane"/>
    <property type="evidence" value="ECO:0007669"/>
    <property type="project" value="Ensembl"/>
</dbReference>
<dbReference type="GO" id="GO:0005509">
    <property type="term" value="F:calcium ion binding"/>
    <property type="evidence" value="ECO:0000250"/>
    <property type="project" value="UniProtKB"/>
</dbReference>
<dbReference type="GO" id="GO:0046982">
    <property type="term" value="F:protein heterodimerization activity"/>
    <property type="evidence" value="ECO:0007669"/>
    <property type="project" value="Ensembl"/>
</dbReference>
<dbReference type="GO" id="GO:0042803">
    <property type="term" value="F:protein homodimerization activity"/>
    <property type="evidence" value="ECO:0007669"/>
    <property type="project" value="Ensembl"/>
</dbReference>
<dbReference type="CDD" id="cd16186">
    <property type="entry name" value="EFh_PEF_grancalcin"/>
    <property type="match status" value="1"/>
</dbReference>
<dbReference type="FunFam" id="1.10.238.10:FF:000087">
    <property type="entry name" value="Sorcin"/>
    <property type="match status" value="1"/>
</dbReference>
<dbReference type="Gene3D" id="6.10.140.900">
    <property type="match status" value="1"/>
</dbReference>
<dbReference type="Gene3D" id="1.10.238.10">
    <property type="entry name" value="EF-hand"/>
    <property type="match status" value="1"/>
</dbReference>
<dbReference type="InterPro" id="IPR011992">
    <property type="entry name" value="EF-hand-dom_pair"/>
</dbReference>
<dbReference type="InterPro" id="IPR018247">
    <property type="entry name" value="EF_Hand_1_Ca_BS"/>
</dbReference>
<dbReference type="InterPro" id="IPR002048">
    <property type="entry name" value="EF_hand_dom"/>
</dbReference>
<dbReference type="PANTHER" id="PTHR46735">
    <property type="entry name" value="CALPAIN, SMALL SUBUNIT 1 A-RELATED"/>
    <property type="match status" value="1"/>
</dbReference>
<dbReference type="PANTHER" id="PTHR46735:SF5">
    <property type="entry name" value="GRANCALCIN"/>
    <property type="match status" value="1"/>
</dbReference>
<dbReference type="Pfam" id="PF13833">
    <property type="entry name" value="EF-hand_8"/>
    <property type="match status" value="1"/>
</dbReference>
<dbReference type="SMART" id="SM00054">
    <property type="entry name" value="EFh"/>
    <property type="match status" value="2"/>
</dbReference>
<dbReference type="SUPFAM" id="SSF47473">
    <property type="entry name" value="EF-hand"/>
    <property type="match status" value="1"/>
</dbReference>
<dbReference type="PROSITE" id="PS00018">
    <property type="entry name" value="EF_HAND_1"/>
    <property type="match status" value="1"/>
</dbReference>
<dbReference type="PROSITE" id="PS50222">
    <property type="entry name" value="EF_HAND_2"/>
    <property type="match status" value="3"/>
</dbReference>
<reference key="1">
    <citation type="journal article" date="2003" name="Mol. Cell. Biol.">
        <title>Granulocyte function in grancalcin-deficient mice.</title>
        <authorList>
            <person name="Roes J."/>
            <person name="Choi B.K."/>
            <person name="Power D."/>
            <person name="Xu P."/>
            <person name="Segal A.W."/>
        </authorList>
    </citation>
    <scope>NUCLEOTIDE SEQUENCE [MRNA]</scope>
    <scope>DISRUPTION PHENOTYPE</scope>
</reference>
<reference key="2">
    <citation type="journal article" date="2004" name="Biosci. Biotechnol. Biochem.">
        <title>Characterization of murine grancalcin specifically expressed in leukocytes and its possible role in host defense against bacterial infection.</title>
        <authorList>
            <person name="Liu F."/>
            <person name="Shinomiya H."/>
            <person name="Kirikae T."/>
            <person name="Hirata H."/>
            <person name="Asano Y."/>
        </authorList>
    </citation>
    <scope>NUCLEOTIDE SEQUENCE [MRNA]</scope>
</reference>
<reference key="3">
    <citation type="journal article" date="2005" name="Science">
        <title>The transcriptional landscape of the mammalian genome.</title>
        <authorList>
            <person name="Carninci P."/>
            <person name="Kasukawa T."/>
            <person name="Katayama S."/>
            <person name="Gough J."/>
            <person name="Frith M.C."/>
            <person name="Maeda N."/>
            <person name="Oyama R."/>
            <person name="Ravasi T."/>
            <person name="Lenhard B."/>
            <person name="Wells C."/>
            <person name="Kodzius R."/>
            <person name="Shimokawa K."/>
            <person name="Bajic V.B."/>
            <person name="Brenner S.E."/>
            <person name="Batalov S."/>
            <person name="Forrest A.R."/>
            <person name="Zavolan M."/>
            <person name="Davis M.J."/>
            <person name="Wilming L.G."/>
            <person name="Aidinis V."/>
            <person name="Allen J.E."/>
            <person name="Ambesi-Impiombato A."/>
            <person name="Apweiler R."/>
            <person name="Aturaliya R.N."/>
            <person name="Bailey T.L."/>
            <person name="Bansal M."/>
            <person name="Baxter L."/>
            <person name="Beisel K.W."/>
            <person name="Bersano T."/>
            <person name="Bono H."/>
            <person name="Chalk A.M."/>
            <person name="Chiu K.P."/>
            <person name="Choudhary V."/>
            <person name="Christoffels A."/>
            <person name="Clutterbuck D.R."/>
            <person name="Crowe M.L."/>
            <person name="Dalla E."/>
            <person name="Dalrymple B.P."/>
            <person name="de Bono B."/>
            <person name="Della Gatta G."/>
            <person name="di Bernardo D."/>
            <person name="Down T."/>
            <person name="Engstrom P."/>
            <person name="Fagiolini M."/>
            <person name="Faulkner G."/>
            <person name="Fletcher C.F."/>
            <person name="Fukushima T."/>
            <person name="Furuno M."/>
            <person name="Futaki S."/>
            <person name="Gariboldi M."/>
            <person name="Georgii-Hemming P."/>
            <person name="Gingeras T.R."/>
            <person name="Gojobori T."/>
            <person name="Green R.E."/>
            <person name="Gustincich S."/>
            <person name="Harbers M."/>
            <person name="Hayashi Y."/>
            <person name="Hensch T.K."/>
            <person name="Hirokawa N."/>
            <person name="Hill D."/>
            <person name="Huminiecki L."/>
            <person name="Iacono M."/>
            <person name="Ikeo K."/>
            <person name="Iwama A."/>
            <person name="Ishikawa T."/>
            <person name="Jakt M."/>
            <person name="Kanapin A."/>
            <person name="Katoh M."/>
            <person name="Kawasawa Y."/>
            <person name="Kelso J."/>
            <person name="Kitamura H."/>
            <person name="Kitano H."/>
            <person name="Kollias G."/>
            <person name="Krishnan S.P."/>
            <person name="Kruger A."/>
            <person name="Kummerfeld S.K."/>
            <person name="Kurochkin I.V."/>
            <person name="Lareau L.F."/>
            <person name="Lazarevic D."/>
            <person name="Lipovich L."/>
            <person name="Liu J."/>
            <person name="Liuni S."/>
            <person name="McWilliam S."/>
            <person name="Madan Babu M."/>
            <person name="Madera M."/>
            <person name="Marchionni L."/>
            <person name="Matsuda H."/>
            <person name="Matsuzawa S."/>
            <person name="Miki H."/>
            <person name="Mignone F."/>
            <person name="Miyake S."/>
            <person name="Morris K."/>
            <person name="Mottagui-Tabar S."/>
            <person name="Mulder N."/>
            <person name="Nakano N."/>
            <person name="Nakauchi H."/>
            <person name="Ng P."/>
            <person name="Nilsson R."/>
            <person name="Nishiguchi S."/>
            <person name="Nishikawa S."/>
            <person name="Nori F."/>
            <person name="Ohara O."/>
            <person name="Okazaki Y."/>
            <person name="Orlando V."/>
            <person name="Pang K.C."/>
            <person name="Pavan W.J."/>
            <person name="Pavesi G."/>
            <person name="Pesole G."/>
            <person name="Petrovsky N."/>
            <person name="Piazza S."/>
            <person name="Reed J."/>
            <person name="Reid J.F."/>
            <person name="Ring B.Z."/>
            <person name="Ringwald M."/>
            <person name="Rost B."/>
            <person name="Ruan Y."/>
            <person name="Salzberg S.L."/>
            <person name="Sandelin A."/>
            <person name="Schneider C."/>
            <person name="Schoenbach C."/>
            <person name="Sekiguchi K."/>
            <person name="Semple C.A."/>
            <person name="Seno S."/>
            <person name="Sessa L."/>
            <person name="Sheng Y."/>
            <person name="Shibata Y."/>
            <person name="Shimada H."/>
            <person name="Shimada K."/>
            <person name="Silva D."/>
            <person name="Sinclair B."/>
            <person name="Sperling S."/>
            <person name="Stupka E."/>
            <person name="Sugiura K."/>
            <person name="Sultana R."/>
            <person name="Takenaka Y."/>
            <person name="Taki K."/>
            <person name="Tammoja K."/>
            <person name="Tan S.L."/>
            <person name="Tang S."/>
            <person name="Taylor M.S."/>
            <person name="Tegner J."/>
            <person name="Teichmann S.A."/>
            <person name="Ueda H.R."/>
            <person name="van Nimwegen E."/>
            <person name="Verardo R."/>
            <person name="Wei C.L."/>
            <person name="Yagi K."/>
            <person name="Yamanishi H."/>
            <person name="Zabarovsky E."/>
            <person name="Zhu S."/>
            <person name="Zimmer A."/>
            <person name="Hide W."/>
            <person name="Bult C."/>
            <person name="Grimmond S.M."/>
            <person name="Teasdale R.D."/>
            <person name="Liu E.T."/>
            <person name="Brusic V."/>
            <person name="Quackenbush J."/>
            <person name="Wahlestedt C."/>
            <person name="Mattick J.S."/>
            <person name="Hume D.A."/>
            <person name="Kai C."/>
            <person name="Sasaki D."/>
            <person name="Tomaru Y."/>
            <person name="Fukuda S."/>
            <person name="Kanamori-Katayama M."/>
            <person name="Suzuki M."/>
            <person name="Aoki J."/>
            <person name="Arakawa T."/>
            <person name="Iida J."/>
            <person name="Imamura K."/>
            <person name="Itoh M."/>
            <person name="Kato T."/>
            <person name="Kawaji H."/>
            <person name="Kawagashira N."/>
            <person name="Kawashima T."/>
            <person name="Kojima M."/>
            <person name="Kondo S."/>
            <person name="Konno H."/>
            <person name="Nakano K."/>
            <person name="Ninomiya N."/>
            <person name="Nishio T."/>
            <person name="Okada M."/>
            <person name="Plessy C."/>
            <person name="Shibata K."/>
            <person name="Shiraki T."/>
            <person name="Suzuki S."/>
            <person name="Tagami M."/>
            <person name="Waki K."/>
            <person name="Watahiki A."/>
            <person name="Okamura-Oho Y."/>
            <person name="Suzuki H."/>
            <person name="Kawai J."/>
            <person name="Hayashizaki Y."/>
        </authorList>
    </citation>
    <scope>NUCLEOTIDE SEQUENCE [LARGE SCALE MRNA]</scope>
    <source>
        <strain>C57BL/6J</strain>
        <tissue>Cecum</tissue>
        <tissue>Corpora quadrigemina</tissue>
        <tissue>Pancreas</tissue>
    </source>
</reference>
<reference key="4">
    <citation type="journal article" date="2004" name="Genome Res.">
        <title>The status, quality, and expansion of the NIH full-length cDNA project: the Mammalian Gene Collection (MGC).</title>
        <authorList>
            <consortium name="The MGC Project Team"/>
        </authorList>
    </citation>
    <scope>NUCLEOTIDE SEQUENCE [LARGE SCALE MRNA]</scope>
    <source>
        <strain>FVB/N</strain>
        <tissue>Kidney</tissue>
    </source>
</reference>
<reference key="5">
    <citation type="journal article" date="2006" name="Cell. Immunol.">
        <title>The role of grancalcin in adhesion of neutrophils.</title>
        <authorList>
            <person name="Xu P."/>
            <person name="Roes J."/>
            <person name="Segal A.W."/>
            <person name="Radulovic M."/>
        </authorList>
    </citation>
    <scope>DISRUPTION PHENOTYPE</scope>
    <scope>FUNCTION</scope>
</reference>
<reference key="6">
    <citation type="journal article" date="2010" name="Cell">
        <title>A tissue-specific atlas of mouse protein phosphorylation and expression.</title>
        <authorList>
            <person name="Huttlin E.L."/>
            <person name="Jedrychowski M.P."/>
            <person name="Elias J.E."/>
            <person name="Goswami T."/>
            <person name="Rad R."/>
            <person name="Beausoleil S.A."/>
            <person name="Villen J."/>
            <person name="Haas W."/>
            <person name="Sowa M.E."/>
            <person name="Gygi S.P."/>
        </authorList>
    </citation>
    <scope>IDENTIFICATION BY MASS SPECTROMETRY [LARGE SCALE ANALYSIS]</scope>
    <source>
        <tissue>Brain</tissue>
        <tissue>Kidney</tissue>
        <tissue>Testis</tissue>
    </source>
</reference>
<protein>
    <recommendedName>
        <fullName>Grancalcin</fullName>
    </recommendedName>
</protein>
<proteinExistence type="evidence at protein level"/>
<accession>Q8VC88</accession>
<accession>Q8BL53</accession>
<accession>Q8K3Z6</accession>
<keyword id="KW-0106">Calcium</keyword>
<keyword id="KW-0963">Cytoplasm</keyword>
<keyword id="KW-0472">Membrane</keyword>
<keyword id="KW-0479">Metal-binding</keyword>
<keyword id="KW-1185">Reference proteome</keyword>
<keyword id="KW-0677">Repeat</keyword>
<feature type="chain" id="PRO_0000073722" description="Grancalcin">
    <location>
        <begin position="1"/>
        <end position="220"/>
    </location>
</feature>
<feature type="domain" description="EF-hand 1" evidence="3">
    <location>
        <begin position="51"/>
        <end position="86"/>
    </location>
</feature>
<feature type="domain" description="EF-hand 2" evidence="3">
    <location>
        <begin position="92"/>
        <end position="127"/>
    </location>
</feature>
<feature type="domain" description="EF-hand 3" evidence="3">
    <location>
        <begin position="122"/>
        <end position="157"/>
    </location>
</feature>
<feature type="domain" description="EF-hand 4" evidence="6">
    <location>
        <begin position="158"/>
        <end position="193"/>
    </location>
</feature>
<feature type="binding site" evidence="6">
    <location>
        <position position="105"/>
    </location>
    <ligand>
        <name>Ca(2+)</name>
        <dbReference type="ChEBI" id="CHEBI:29108"/>
        <label>1</label>
    </ligand>
</feature>
<feature type="binding site" evidence="6">
    <location>
        <position position="107"/>
    </location>
    <ligand>
        <name>Ca(2+)</name>
        <dbReference type="ChEBI" id="CHEBI:29108"/>
        <label>1</label>
    </ligand>
</feature>
<feature type="binding site" evidence="6">
    <location>
        <position position="109"/>
    </location>
    <ligand>
        <name>Ca(2+)</name>
        <dbReference type="ChEBI" id="CHEBI:29108"/>
        <label>1</label>
    </ligand>
</feature>
<feature type="binding site" evidence="6">
    <location>
        <position position="111"/>
    </location>
    <ligand>
        <name>Ca(2+)</name>
        <dbReference type="ChEBI" id="CHEBI:29108"/>
        <label>1</label>
    </ligand>
</feature>
<feature type="binding site" evidence="6">
    <location>
        <position position="116"/>
    </location>
    <ligand>
        <name>Ca(2+)</name>
        <dbReference type="ChEBI" id="CHEBI:29108"/>
        <label>1</label>
    </ligand>
</feature>
<feature type="binding site" evidence="3">
    <location>
        <position position="135"/>
    </location>
    <ligand>
        <name>Ca(2+)</name>
        <dbReference type="ChEBI" id="CHEBI:29108"/>
        <label>2</label>
    </ligand>
</feature>
<feature type="binding site" evidence="3">
    <location>
        <position position="137"/>
    </location>
    <ligand>
        <name>Ca(2+)</name>
        <dbReference type="ChEBI" id="CHEBI:29108"/>
        <label>2</label>
    </ligand>
</feature>
<feature type="binding site" evidence="3">
    <location>
        <position position="139"/>
    </location>
    <ligand>
        <name>Ca(2+)</name>
        <dbReference type="ChEBI" id="CHEBI:29108"/>
        <label>2</label>
    </ligand>
</feature>
<feature type="binding site" evidence="3">
    <location>
        <position position="141"/>
    </location>
    <ligand>
        <name>Ca(2+)</name>
        <dbReference type="ChEBI" id="CHEBI:29108"/>
        <label>2</label>
    </ligand>
</feature>
<feature type="binding site" evidence="3">
    <location>
        <position position="146"/>
    </location>
    <ligand>
        <name>Ca(2+)</name>
        <dbReference type="ChEBI" id="CHEBI:29108"/>
        <label>2</label>
    </ligand>
</feature>
<feature type="sequence conflict" description="In Ref. 1; AAM66720." evidence="6" ref="1">
    <original>KL</original>
    <variation>NV</variation>
    <location>
        <begin position="187"/>
        <end position="188"/>
    </location>
</feature>
<feature type="sequence conflict" description="In Ref. 3; BAC32686." evidence="6" ref="3">
    <original>T</original>
    <variation>P</variation>
    <location>
        <position position="217"/>
    </location>
</feature>
<name>GRAN_MOUSE</name>